<accession>Q1GXH3</accession>
<dbReference type="EMBL" id="CP000284">
    <property type="protein sequence ID" value="ABE48374.1"/>
    <property type="molecule type" value="Genomic_DNA"/>
</dbReference>
<dbReference type="RefSeq" id="WP_011478471.1">
    <property type="nucleotide sequence ID" value="NC_007947.1"/>
</dbReference>
<dbReference type="SMR" id="Q1GXH3"/>
<dbReference type="STRING" id="265072.Mfla_0103"/>
<dbReference type="KEGG" id="mfa:Mfla_0103"/>
<dbReference type="eggNOG" id="COG1492">
    <property type="taxonomic scope" value="Bacteria"/>
</dbReference>
<dbReference type="HOGENOM" id="CLU_019250_2_2_4"/>
<dbReference type="UniPathway" id="UPA00148"/>
<dbReference type="Proteomes" id="UP000002440">
    <property type="component" value="Chromosome"/>
</dbReference>
<dbReference type="GO" id="GO:0015420">
    <property type="term" value="F:ABC-type vitamin B12 transporter activity"/>
    <property type="evidence" value="ECO:0007669"/>
    <property type="project" value="UniProtKB-UniRule"/>
</dbReference>
<dbReference type="GO" id="GO:0003824">
    <property type="term" value="F:catalytic activity"/>
    <property type="evidence" value="ECO:0007669"/>
    <property type="project" value="InterPro"/>
</dbReference>
<dbReference type="GO" id="GO:0009236">
    <property type="term" value="P:cobalamin biosynthetic process"/>
    <property type="evidence" value="ECO:0007669"/>
    <property type="project" value="UniProtKB-UniRule"/>
</dbReference>
<dbReference type="CDD" id="cd05389">
    <property type="entry name" value="CobQ_N"/>
    <property type="match status" value="1"/>
</dbReference>
<dbReference type="CDD" id="cd01750">
    <property type="entry name" value="GATase1_CobQ"/>
    <property type="match status" value="1"/>
</dbReference>
<dbReference type="Gene3D" id="3.40.50.880">
    <property type="match status" value="1"/>
</dbReference>
<dbReference type="Gene3D" id="3.40.50.300">
    <property type="entry name" value="P-loop containing nucleotide triphosphate hydrolases"/>
    <property type="match status" value="1"/>
</dbReference>
<dbReference type="HAMAP" id="MF_00028">
    <property type="entry name" value="CobQ"/>
    <property type="match status" value="1"/>
</dbReference>
<dbReference type="InterPro" id="IPR029062">
    <property type="entry name" value="Class_I_gatase-like"/>
</dbReference>
<dbReference type="InterPro" id="IPR002586">
    <property type="entry name" value="CobQ/CobB/MinD/ParA_Nub-bd_dom"/>
</dbReference>
<dbReference type="InterPro" id="IPR033949">
    <property type="entry name" value="CobQ_GATase1"/>
</dbReference>
<dbReference type="InterPro" id="IPR047045">
    <property type="entry name" value="CobQ_N"/>
</dbReference>
<dbReference type="InterPro" id="IPR004459">
    <property type="entry name" value="CobQ_synth"/>
</dbReference>
<dbReference type="InterPro" id="IPR011698">
    <property type="entry name" value="GATase_3"/>
</dbReference>
<dbReference type="InterPro" id="IPR027417">
    <property type="entry name" value="P-loop_NTPase"/>
</dbReference>
<dbReference type="NCBIfam" id="TIGR00313">
    <property type="entry name" value="cobQ"/>
    <property type="match status" value="1"/>
</dbReference>
<dbReference type="NCBIfam" id="NF001989">
    <property type="entry name" value="PRK00784.1"/>
    <property type="match status" value="1"/>
</dbReference>
<dbReference type="PANTHER" id="PTHR21343:SF1">
    <property type="entry name" value="COBYRIC ACID SYNTHASE"/>
    <property type="match status" value="1"/>
</dbReference>
<dbReference type="PANTHER" id="PTHR21343">
    <property type="entry name" value="DETHIOBIOTIN SYNTHETASE"/>
    <property type="match status" value="1"/>
</dbReference>
<dbReference type="Pfam" id="PF01656">
    <property type="entry name" value="CbiA"/>
    <property type="match status" value="1"/>
</dbReference>
<dbReference type="Pfam" id="PF07685">
    <property type="entry name" value="GATase_3"/>
    <property type="match status" value="1"/>
</dbReference>
<dbReference type="SUPFAM" id="SSF52317">
    <property type="entry name" value="Class I glutamine amidotransferase-like"/>
    <property type="match status" value="1"/>
</dbReference>
<dbReference type="SUPFAM" id="SSF52540">
    <property type="entry name" value="P-loop containing nucleoside triphosphate hydrolases"/>
    <property type="match status" value="1"/>
</dbReference>
<dbReference type="PROSITE" id="PS51274">
    <property type="entry name" value="GATASE_COBBQ"/>
    <property type="match status" value="1"/>
</dbReference>
<keyword id="KW-0169">Cobalamin biosynthesis</keyword>
<keyword id="KW-0315">Glutamine amidotransferase</keyword>
<keyword id="KW-1185">Reference proteome</keyword>
<organism>
    <name type="scientific">Methylobacillus flagellatus (strain ATCC 51484 / DSM 6875 / VKM B-1610 / KT)</name>
    <dbReference type="NCBI Taxonomy" id="265072"/>
    <lineage>
        <taxon>Bacteria</taxon>
        <taxon>Pseudomonadati</taxon>
        <taxon>Pseudomonadota</taxon>
        <taxon>Betaproteobacteria</taxon>
        <taxon>Nitrosomonadales</taxon>
        <taxon>Methylophilaceae</taxon>
        <taxon>Methylobacillus</taxon>
    </lineage>
</organism>
<evidence type="ECO:0000255" key="1">
    <source>
        <dbReference type="HAMAP-Rule" id="MF_00028"/>
    </source>
</evidence>
<feature type="chain" id="PRO_0000332347" description="Cobyric acid synthase">
    <location>
        <begin position="1"/>
        <end position="483"/>
    </location>
</feature>
<feature type="domain" description="GATase cobBQ-type" evidence="1">
    <location>
        <begin position="244"/>
        <end position="430"/>
    </location>
</feature>
<feature type="active site" description="Nucleophile" evidence="1">
    <location>
        <position position="325"/>
    </location>
</feature>
<feature type="active site" evidence="1">
    <location>
        <position position="422"/>
    </location>
</feature>
<name>COBQ_METFK</name>
<comment type="function">
    <text evidence="1">Catalyzes amidations at positions B, D, E, and G on adenosylcobyrinic A,C-diamide. NH(2) groups are provided by glutamine, and one molecule of ATP is hydrogenolyzed for each amidation.</text>
</comment>
<comment type="pathway">
    <text evidence="1">Cofactor biosynthesis; adenosylcobalamin biosynthesis.</text>
</comment>
<comment type="similarity">
    <text evidence="1">Belongs to the CobB/CobQ family. CobQ subfamily.</text>
</comment>
<sequence>MVQGTTSDAGKSTLVAGLCRVLYRRGVRVAPFKPQNMALNSAVTSDGGEIGRAQAVQAQACGLLPHTDMNPVLLKPNTDTGCQVIIHGKVLANLEAMAYHAYKPKAREAVLASWQRLREQYECIIVEGAGSPAEINLRQNDIANMGFAEAADCPVILIADIDRGGVFAHIVGTLALLSESERKRIIGFVINRFRGDIALLQSGLDWLQQETGIPVLGVLPYLRNLHLEAEDAVAKDTPDKPQTWLRVIAPVLPHVSNHTDMDALRMHPHVDFQFIELNEPVPPADLIILPGSKNVRGDLAVLASHGWRDKISRHLRYGGKLMGICGGFQMLGRKIHDPHGLEGDAGSSDGFGWLDMETTLTKEKHLKEVEGKLTFADAVVTGYEIHMGVSSGPALERPLLHIGTQAEGALSEDGQIAGTYLHGLFDHAEATQAWLNWAGYSQLKQAQETIAHYDYLALREASLERLADEVELHLDWNRLQSYL</sequence>
<proteinExistence type="inferred from homology"/>
<gene>
    <name evidence="1" type="primary">cobQ</name>
    <name type="ordered locus">Mfla_0103</name>
</gene>
<reference key="1">
    <citation type="submission" date="2006-03" db="EMBL/GenBank/DDBJ databases">
        <title>Complete sequence of Methylobacillus flagellatus KT.</title>
        <authorList>
            <consortium name="US DOE Joint Genome Institute"/>
            <person name="Copeland A."/>
            <person name="Lucas S."/>
            <person name="Lapidus A."/>
            <person name="Barry K."/>
            <person name="Detter J.C."/>
            <person name="Glavina del Rio T."/>
            <person name="Hammon N."/>
            <person name="Israni S."/>
            <person name="Dalin E."/>
            <person name="Tice H."/>
            <person name="Pitluck S."/>
            <person name="Brettin T."/>
            <person name="Bruce D."/>
            <person name="Han C."/>
            <person name="Tapia R."/>
            <person name="Saunders E."/>
            <person name="Gilna P."/>
            <person name="Schmutz J."/>
            <person name="Larimer F."/>
            <person name="Land M."/>
            <person name="Kyrpides N."/>
            <person name="Anderson I."/>
            <person name="Richardson P."/>
        </authorList>
    </citation>
    <scope>NUCLEOTIDE SEQUENCE [LARGE SCALE GENOMIC DNA]</scope>
    <source>
        <strain>ATCC 51484 / DSM 6875 / VKM B-1610 / KT</strain>
    </source>
</reference>
<protein>
    <recommendedName>
        <fullName evidence="1">Cobyric acid synthase</fullName>
    </recommendedName>
</protein>